<proteinExistence type="inferred from homology"/>
<protein>
    <recommendedName>
        <fullName evidence="1">Na(+)/H(+) antiporter NhaA 2</fullName>
    </recommendedName>
    <alternativeName>
        <fullName evidence="1">Sodium/proton antiporter NhaA 2</fullName>
    </alternativeName>
</protein>
<reference key="1">
    <citation type="submission" date="2007-05" db="EMBL/GenBank/DDBJ databases">
        <title>Complete sequence of plasmid1 pACRY01 of Acidiphilium cryptum JF-5.</title>
        <authorList>
            <consortium name="US DOE Joint Genome Institute"/>
            <person name="Copeland A."/>
            <person name="Lucas S."/>
            <person name="Lapidus A."/>
            <person name="Barry K."/>
            <person name="Detter J.C."/>
            <person name="Glavina del Rio T."/>
            <person name="Hammon N."/>
            <person name="Israni S."/>
            <person name="Dalin E."/>
            <person name="Tice H."/>
            <person name="Pitluck S."/>
            <person name="Sims D."/>
            <person name="Brettin T."/>
            <person name="Bruce D."/>
            <person name="Han C."/>
            <person name="Schmutz J."/>
            <person name="Larimer F."/>
            <person name="Land M."/>
            <person name="Hauser L."/>
            <person name="Kyrpides N."/>
            <person name="Kim E."/>
            <person name="Magnuson T."/>
            <person name="Richardson P."/>
        </authorList>
    </citation>
    <scope>NUCLEOTIDE SEQUENCE [LARGE SCALE GENOMIC DNA]</scope>
    <source>
        <strain>JF-5</strain>
    </source>
</reference>
<sequence length="449" mass="47190">MITDQNSKPQQGELPTTHIDALTNSFSQFLRIEATSGAVLLLATVVALTLSNSPWSDGFRSLWETPIGIQIGAFQFLRSLRDLINDGLMTLFFFIVALEIKREVVLGELRNPRMVALSVVAAAGGMLVPMGLYLALQHGQPGQHGWGVVMPTDTAFVIGCLALLGSRVPPGLRVFLLSLAVVDDLAAILVVAVGYSRSIDWTALALGAVGLVIIRGMALLGVRNIRVYFLAGAIIWLAVNASGIHATIVGVILGLMTPTAGWVSDQRLGEILRKVLSYPPGDHWSGDTEDNRALQVAGIAVRETLSPVERLEAMLHPWVAFGVMPLFALANAGVPITIKGLINPVSLAVMAGFVLGKPIGVTAFAWLGVRTGVAIRPAGLTWGGLVGGALLTGIGFTMALFIAGQAFQDATLNAAKLGILAASVVSSVAGLTLLCALPRSDGTLDADFH</sequence>
<dbReference type="EMBL" id="CP000689">
    <property type="protein sequence ID" value="ABQ28784.1"/>
    <property type="status" value="ALT_SEQ"/>
    <property type="molecule type" value="Genomic_DNA"/>
</dbReference>
<dbReference type="EMBL" id="CP000689">
    <property type="protein sequence ID" value="ABQ28786.1"/>
    <property type="status" value="ALT_SEQ"/>
    <property type="molecule type" value="Genomic_DNA"/>
</dbReference>
<dbReference type="SMR" id="A5FT52"/>
<dbReference type="KEGG" id="acr:Acry_3160"/>
<dbReference type="KEGG" id="acr:Acry_3162"/>
<dbReference type="HOGENOM" id="CLU_015803_1_2_5"/>
<dbReference type="Proteomes" id="UP000000245">
    <property type="component" value="Plasmid pACRY01"/>
</dbReference>
<dbReference type="GO" id="GO:0005886">
    <property type="term" value="C:plasma membrane"/>
    <property type="evidence" value="ECO:0007669"/>
    <property type="project" value="UniProtKB-SubCell"/>
</dbReference>
<dbReference type="GO" id="GO:0015385">
    <property type="term" value="F:sodium:proton antiporter activity"/>
    <property type="evidence" value="ECO:0007669"/>
    <property type="project" value="TreeGrafter"/>
</dbReference>
<dbReference type="GO" id="GO:0006885">
    <property type="term" value="P:regulation of pH"/>
    <property type="evidence" value="ECO:0007669"/>
    <property type="project" value="InterPro"/>
</dbReference>
<dbReference type="Gene3D" id="1.20.1530.10">
    <property type="entry name" value="Na+/H+ antiporter like domain"/>
    <property type="match status" value="1"/>
</dbReference>
<dbReference type="HAMAP" id="MF_01844">
    <property type="entry name" value="NhaA"/>
    <property type="match status" value="1"/>
</dbReference>
<dbReference type="InterPro" id="IPR023171">
    <property type="entry name" value="Na/H_antiporter_dom_sf"/>
</dbReference>
<dbReference type="InterPro" id="IPR004670">
    <property type="entry name" value="NhaA"/>
</dbReference>
<dbReference type="NCBIfam" id="TIGR00773">
    <property type="entry name" value="NhaA"/>
    <property type="match status" value="1"/>
</dbReference>
<dbReference type="PANTHER" id="PTHR30341:SF0">
    <property type="entry name" value="NA(+)_H(+) ANTIPORTER NHAA"/>
    <property type="match status" value="1"/>
</dbReference>
<dbReference type="PANTHER" id="PTHR30341">
    <property type="entry name" value="SODIUM ION/PROTON ANTIPORTER NHAA-RELATED"/>
    <property type="match status" value="1"/>
</dbReference>
<dbReference type="Pfam" id="PF06965">
    <property type="entry name" value="Na_H_antiport_1"/>
    <property type="match status" value="1"/>
</dbReference>
<keyword id="KW-0050">Antiport</keyword>
<keyword id="KW-0997">Cell inner membrane</keyword>
<keyword id="KW-1003">Cell membrane</keyword>
<keyword id="KW-0406">Ion transport</keyword>
<keyword id="KW-0472">Membrane</keyword>
<keyword id="KW-0614">Plasmid</keyword>
<keyword id="KW-1185">Reference proteome</keyword>
<keyword id="KW-0915">Sodium</keyword>
<keyword id="KW-0739">Sodium transport</keyword>
<keyword id="KW-0812">Transmembrane</keyword>
<keyword id="KW-1133">Transmembrane helix</keyword>
<keyword id="KW-0813">Transport</keyword>
<geneLocation type="plasmid">
    <name>pACRY01</name>
</geneLocation>
<feature type="chain" id="PRO_0000334216" description="Na(+)/H(+) antiporter NhaA 2">
    <location>
        <begin position="1"/>
        <end position="449"/>
    </location>
</feature>
<feature type="transmembrane region" description="Helical" evidence="1">
    <location>
        <begin position="32"/>
        <end position="52"/>
    </location>
</feature>
<feature type="transmembrane region" description="Helical" evidence="1">
    <location>
        <begin position="87"/>
        <end position="107"/>
    </location>
</feature>
<feature type="transmembrane region" description="Helical" evidence="1">
    <location>
        <begin position="114"/>
        <end position="134"/>
    </location>
</feature>
<feature type="transmembrane region" description="Helical" evidence="1">
    <location>
        <begin position="145"/>
        <end position="165"/>
    </location>
</feature>
<feature type="transmembrane region" description="Helical" evidence="1">
    <location>
        <begin position="174"/>
        <end position="194"/>
    </location>
</feature>
<feature type="transmembrane region" description="Helical" evidence="1">
    <location>
        <begin position="202"/>
        <end position="222"/>
    </location>
</feature>
<feature type="transmembrane region" description="Helical" evidence="1">
    <location>
        <begin position="233"/>
        <end position="253"/>
    </location>
</feature>
<feature type="transmembrane region" description="Helical" evidence="1">
    <location>
        <begin position="318"/>
        <end position="338"/>
    </location>
</feature>
<feature type="transmembrane region" description="Helical" evidence="1">
    <location>
        <begin position="347"/>
        <end position="367"/>
    </location>
</feature>
<feature type="transmembrane region" description="Helical" evidence="1">
    <location>
        <begin position="382"/>
        <end position="402"/>
    </location>
</feature>
<feature type="transmembrane region" description="Helical" evidence="1">
    <location>
        <begin position="417"/>
        <end position="437"/>
    </location>
</feature>
<accession>A5FT52</accession>
<accession>A5FT54</accession>
<evidence type="ECO:0000255" key="1">
    <source>
        <dbReference type="HAMAP-Rule" id="MF_01844"/>
    </source>
</evidence>
<evidence type="ECO:0000305" key="2"/>
<comment type="function">
    <text evidence="1">Na(+)/H(+) antiporter that extrudes sodium in exchange for external protons.</text>
</comment>
<comment type="catalytic activity">
    <reaction evidence="1">
        <text>Na(+)(in) + 2 H(+)(out) = Na(+)(out) + 2 H(+)(in)</text>
        <dbReference type="Rhea" id="RHEA:29251"/>
        <dbReference type="ChEBI" id="CHEBI:15378"/>
        <dbReference type="ChEBI" id="CHEBI:29101"/>
    </reaction>
    <physiologicalReaction direction="left-to-right" evidence="1">
        <dbReference type="Rhea" id="RHEA:29252"/>
    </physiologicalReaction>
</comment>
<comment type="subcellular location">
    <subcellularLocation>
        <location evidence="1">Cell inner membrane</location>
        <topology evidence="1">Multi-pass membrane protein</topology>
    </subcellularLocation>
</comment>
<comment type="similarity">
    <text evidence="1">Belongs to the NhaA Na(+)/H(+) (TC 2.A.33) antiporter family.</text>
</comment>
<comment type="caution">
    <text evidence="2">The sequence is interrupted by the insertion of an IS4 element between positions 304 and 305.</text>
</comment>
<name>NHAA2_ACICJ</name>
<organism>
    <name type="scientific">Acidiphilium cryptum (strain JF-5)</name>
    <dbReference type="NCBI Taxonomy" id="349163"/>
    <lineage>
        <taxon>Bacteria</taxon>
        <taxon>Pseudomonadati</taxon>
        <taxon>Pseudomonadota</taxon>
        <taxon>Alphaproteobacteria</taxon>
        <taxon>Acetobacterales</taxon>
        <taxon>Acidocellaceae</taxon>
        <taxon>Acidiphilium</taxon>
    </lineage>
</organism>
<gene>
    <name evidence="1" type="primary">nhaA2</name>
    <name type="ordered locus">Acry_3160/Acry_3162</name>
</gene>